<keyword id="KW-0027">Amidation</keyword>
<keyword id="KW-0903">Direct protein sequencing</keyword>
<keyword id="KW-0964">Secreted</keyword>
<keyword id="KW-0800">Toxin</keyword>
<proteinExistence type="evidence at protein level"/>
<protein>
    <recommendedName>
        <fullName evidence="3">Cupiennin-3b</fullName>
        <shortName evidence="3">Cu-3b</shortName>
    </recommendedName>
    <alternativeName>
        <fullName evidence="2">Short cationic peptide-3b</fullName>
        <shortName evidence="2">SCP-3b</shortName>
    </alternativeName>
</protein>
<evidence type="ECO:0000269" key="1">
    <source>
    </source>
</evidence>
<evidence type="ECO:0000303" key="2">
    <source>
    </source>
</evidence>
<evidence type="ECO:0000303" key="3">
    <source ref="2"/>
</evidence>
<evidence type="ECO:0000305" key="4"/>
<evidence type="ECO:0000305" key="5">
    <source>
    </source>
</evidence>
<feature type="peptide" id="PRO_0000421209" description="Cupiennin-3b" evidence="1">
    <location>
        <begin position="1"/>
        <end position="27"/>
    </location>
</feature>
<feature type="modified residue" description="Glutamic acid 1-amide" evidence="1">
    <location>
        <position position="27"/>
    </location>
</feature>
<reference key="1">
    <citation type="journal article" date="2012" name="FEBS J.">
        <title>Multicomponent venom of the spider Cupiennius salei: a bioanalytical investigation applying different strategies.</title>
        <authorList>
            <person name="Trachsel C."/>
            <person name="Siegemund D."/>
            <person name="Kampfer U."/>
            <person name="Kopp L.S."/>
            <person name="Buhr C."/>
            <person name="Grossmann J."/>
            <person name="Luthi C."/>
            <person name="Cunningham M."/>
            <person name="Nentwig W."/>
            <person name="Kuhn-Nentwig L."/>
            <person name="Schurch S."/>
            <person name="Schaller J."/>
        </authorList>
    </citation>
    <scope>PROTEIN SEQUENCE</scope>
    <scope>MASS SPECTROMETRY</scope>
    <scope>AMIDATION AT GLU-27</scope>
    <source>
        <tissue>Venom</tissue>
    </source>
</reference>
<reference key="2">
    <citation type="unpublished observations" date="2015-06">
        <authorList>
            <person name="Kuhn-Nentwig L."/>
            <person name="Gohel T."/>
        </authorList>
    </citation>
    <scope>NOMENCLATURE</scope>
</reference>
<dbReference type="GO" id="GO:0005576">
    <property type="term" value="C:extracellular region"/>
    <property type="evidence" value="ECO:0007669"/>
    <property type="project" value="UniProtKB-SubCell"/>
</dbReference>
<dbReference type="GO" id="GO:0090729">
    <property type="term" value="F:toxin activity"/>
    <property type="evidence" value="ECO:0007669"/>
    <property type="project" value="UniProtKB-KW"/>
</dbReference>
<dbReference type="GO" id="GO:0042742">
    <property type="term" value="P:defense response to bacterium"/>
    <property type="evidence" value="ECO:0007669"/>
    <property type="project" value="InterPro"/>
</dbReference>
<dbReference type="InterPro" id="IPR035164">
    <property type="entry name" value="Cupiennin"/>
</dbReference>
<dbReference type="Pfam" id="PF17563">
    <property type="entry name" value="Cu"/>
    <property type="match status" value="1"/>
</dbReference>
<comment type="subcellular location">
    <subcellularLocation>
        <location evidence="1">Secreted</location>
    </subcellularLocation>
</comment>
<comment type="tissue specificity">
    <text evidence="5">Expressed by the venom gland.</text>
</comment>
<comment type="mass spectrometry"/>
<comment type="similarity">
    <text evidence="4">Belongs to the cationic peptide 04 (cupiennin) family. 03 subfamily.</text>
</comment>
<organism>
    <name type="scientific">Cupiennius salei</name>
    <name type="common">American wandering spider</name>
    <dbReference type="NCBI Taxonomy" id="6928"/>
    <lineage>
        <taxon>Eukaryota</taxon>
        <taxon>Metazoa</taxon>
        <taxon>Ecdysozoa</taxon>
        <taxon>Arthropoda</taxon>
        <taxon>Chelicerata</taxon>
        <taxon>Arachnida</taxon>
        <taxon>Araneae</taxon>
        <taxon>Araneomorphae</taxon>
        <taxon>Entelegynae</taxon>
        <taxon>Lycosoidea</taxon>
        <taxon>Ctenidae</taxon>
        <taxon>Cupiennius</taxon>
    </lineage>
</organism>
<accession>B3EWV2</accession>
<name>TXC3B_CUPSA</name>
<sequence>GFGSLFKFLGKKVLKTVAKQAAKKQME</sequence>